<protein>
    <recommendedName>
        <fullName evidence="1">Adenine deaminase 1</fullName>
        <shortName evidence="1">Adenase 1</shortName>
        <shortName evidence="1">Adenine aminase 1</shortName>
        <ecNumber evidence="1">3.5.4.2</ecNumber>
    </recommendedName>
</protein>
<sequence>MDAQTFKTAIVRRRLVDVLMNPELKATLVLKNGLVINVVTREIYPADVAVYDEYILKVGDASDLIGPETEVVDLQGKYYVSPGFIDSHMHFESSMLTISEFSRLSIPSGTTTLVADPHEIGNALGPVGIKAMAEETKVVPNRVYLVVPALTPDCPGLETAGYDITSRDMPEILNYPNVIGIGELQGFSNAKYVYKYTPEIITDLIASTTYAKSIGKIVDGNAPELFGSELAAHLIAAGTEASCHETTTKEECVEKLRYGMYVFMREGSTQKNMAECIRAVTEEGLDSRRLIGATDDMVAEDLAKNGHMNWVVARIIKQGIDPVEAIQMVTINPATYFGLKHVGVLAPGKMADIVVISDLMDMKVEKVYIGGKLVAEKGKMVVNIPKYTYPEEVKHSVKCKPVTAEALEIKATGSNAVVRTIGLIPDQNLTESFEFTVPVSGGVAQPDLTQDVLPIAVVERYGRNGSIGRAFVRGFGLKGGAFAESVSHDAHNIIVVGTSYQDMALAVNRVIEMGGGVAVVKNGRVLGDLRLPVGGLITDELDGYELSRKIAELHRLTAVELGCTVHAPFMHLSFLALTTSPKWKITDQGLIDVNSFAIIPPVK</sequence>
<gene>
    <name evidence="1" type="primary">ade1</name>
    <name type="ordered locus">CHY_0689</name>
</gene>
<name>ADEC1_CARHZ</name>
<evidence type="ECO:0000255" key="1">
    <source>
        <dbReference type="HAMAP-Rule" id="MF_01518"/>
    </source>
</evidence>
<comment type="catalytic activity">
    <reaction evidence="1">
        <text>adenine + H2O + H(+) = hypoxanthine + NH4(+)</text>
        <dbReference type="Rhea" id="RHEA:23688"/>
        <dbReference type="ChEBI" id="CHEBI:15377"/>
        <dbReference type="ChEBI" id="CHEBI:15378"/>
        <dbReference type="ChEBI" id="CHEBI:16708"/>
        <dbReference type="ChEBI" id="CHEBI:17368"/>
        <dbReference type="ChEBI" id="CHEBI:28938"/>
        <dbReference type="EC" id="3.5.4.2"/>
    </reaction>
</comment>
<comment type="cofactor">
    <cofactor evidence="1">
        <name>Mn(2+)</name>
        <dbReference type="ChEBI" id="CHEBI:29035"/>
    </cofactor>
</comment>
<comment type="similarity">
    <text evidence="1">Belongs to the metallo-dependent hydrolases superfamily. Adenine deaminase family.</text>
</comment>
<reference key="1">
    <citation type="journal article" date="2005" name="PLoS Genet.">
        <title>Life in hot carbon monoxide: the complete genome sequence of Carboxydothermus hydrogenoformans Z-2901.</title>
        <authorList>
            <person name="Wu M."/>
            <person name="Ren Q."/>
            <person name="Durkin A.S."/>
            <person name="Daugherty S.C."/>
            <person name="Brinkac L.M."/>
            <person name="Dodson R.J."/>
            <person name="Madupu R."/>
            <person name="Sullivan S.A."/>
            <person name="Kolonay J.F."/>
            <person name="Nelson W.C."/>
            <person name="Tallon L.J."/>
            <person name="Jones K.M."/>
            <person name="Ulrich L.E."/>
            <person name="Gonzalez J.M."/>
            <person name="Zhulin I.B."/>
            <person name="Robb F.T."/>
            <person name="Eisen J.A."/>
        </authorList>
    </citation>
    <scope>NUCLEOTIDE SEQUENCE [LARGE SCALE GENOMIC DNA]</scope>
    <source>
        <strain>ATCC BAA-161 / DSM 6008 / Z-2901</strain>
    </source>
</reference>
<organism>
    <name type="scientific">Carboxydothermus hydrogenoformans (strain ATCC BAA-161 / DSM 6008 / Z-2901)</name>
    <dbReference type="NCBI Taxonomy" id="246194"/>
    <lineage>
        <taxon>Bacteria</taxon>
        <taxon>Bacillati</taxon>
        <taxon>Bacillota</taxon>
        <taxon>Clostridia</taxon>
        <taxon>Thermoanaerobacterales</taxon>
        <taxon>Thermoanaerobacteraceae</taxon>
        <taxon>Carboxydothermus</taxon>
    </lineage>
</organism>
<dbReference type="EC" id="3.5.4.2" evidence="1"/>
<dbReference type="EMBL" id="CP000141">
    <property type="protein sequence ID" value="ABB13729.1"/>
    <property type="molecule type" value="Genomic_DNA"/>
</dbReference>
<dbReference type="RefSeq" id="WP_011343620.1">
    <property type="nucleotide sequence ID" value="NC_007503.1"/>
</dbReference>
<dbReference type="SMR" id="Q3AE90"/>
<dbReference type="STRING" id="246194.CHY_0689"/>
<dbReference type="KEGG" id="chy:CHY_0689"/>
<dbReference type="eggNOG" id="COG1001">
    <property type="taxonomic scope" value="Bacteria"/>
</dbReference>
<dbReference type="HOGENOM" id="CLU_027935_0_0_9"/>
<dbReference type="InParanoid" id="Q3AE90"/>
<dbReference type="OrthoDB" id="9775607at2"/>
<dbReference type="Proteomes" id="UP000002706">
    <property type="component" value="Chromosome"/>
</dbReference>
<dbReference type="GO" id="GO:0000034">
    <property type="term" value="F:adenine deaminase activity"/>
    <property type="evidence" value="ECO:0007669"/>
    <property type="project" value="UniProtKB-UniRule"/>
</dbReference>
<dbReference type="GO" id="GO:0006146">
    <property type="term" value="P:adenine catabolic process"/>
    <property type="evidence" value="ECO:0007669"/>
    <property type="project" value="InterPro"/>
</dbReference>
<dbReference type="Gene3D" id="3.20.20.140">
    <property type="entry name" value="Metal-dependent hydrolases"/>
    <property type="match status" value="1"/>
</dbReference>
<dbReference type="Gene3D" id="2.30.40.10">
    <property type="entry name" value="Urease, subunit C, domain 1"/>
    <property type="match status" value="1"/>
</dbReference>
<dbReference type="HAMAP" id="MF_01518">
    <property type="entry name" value="Adenine_deamin"/>
    <property type="match status" value="1"/>
</dbReference>
<dbReference type="InterPro" id="IPR006679">
    <property type="entry name" value="Adenine_deam"/>
</dbReference>
<dbReference type="InterPro" id="IPR026912">
    <property type="entry name" value="Adenine_deam_C"/>
</dbReference>
<dbReference type="InterPro" id="IPR006680">
    <property type="entry name" value="Amidohydro-rel"/>
</dbReference>
<dbReference type="InterPro" id="IPR011059">
    <property type="entry name" value="Metal-dep_hydrolase_composite"/>
</dbReference>
<dbReference type="InterPro" id="IPR032466">
    <property type="entry name" value="Metal_Hydrolase"/>
</dbReference>
<dbReference type="NCBIfam" id="TIGR01178">
    <property type="entry name" value="ade"/>
    <property type="match status" value="1"/>
</dbReference>
<dbReference type="PANTHER" id="PTHR11113:SF2">
    <property type="entry name" value="ADENINE DEAMINASE"/>
    <property type="match status" value="1"/>
</dbReference>
<dbReference type="PANTHER" id="PTHR11113">
    <property type="entry name" value="N-ACETYLGLUCOSAMINE-6-PHOSPHATE DEACETYLASE"/>
    <property type="match status" value="1"/>
</dbReference>
<dbReference type="Pfam" id="PF13382">
    <property type="entry name" value="Adenine_deam_C"/>
    <property type="match status" value="1"/>
</dbReference>
<dbReference type="Pfam" id="PF01979">
    <property type="entry name" value="Amidohydro_1"/>
    <property type="match status" value="1"/>
</dbReference>
<dbReference type="SUPFAM" id="SSF51338">
    <property type="entry name" value="Composite domain of metallo-dependent hydrolases"/>
    <property type="match status" value="1"/>
</dbReference>
<dbReference type="SUPFAM" id="SSF51556">
    <property type="entry name" value="Metallo-dependent hydrolases"/>
    <property type="match status" value="1"/>
</dbReference>
<keyword id="KW-0378">Hydrolase</keyword>
<keyword id="KW-0464">Manganese</keyword>
<keyword id="KW-1185">Reference proteome</keyword>
<feature type="chain" id="PRO_0000292377" description="Adenine deaminase 1">
    <location>
        <begin position="1"/>
        <end position="603"/>
    </location>
</feature>
<accession>Q3AE90</accession>
<proteinExistence type="inferred from homology"/>